<evidence type="ECO:0000255" key="1">
    <source>
        <dbReference type="HAMAP-Rule" id="MF_01026"/>
    </source>
</evidence>
<gene>
    <name evidence="1" type="primary">leuC</name>
    <name type="ordered locus">BURPS1106A_A2316</name>
</gene>
<protein>
    <recommendedName>
        <fullName evidence="1">3-isopropylmalate dehydratase large subunit</fullName>
        <ecNumber evidence="1">4.2.1.33</ecNumber>
    </recommendedName>
    <alternativeName>
        <fullName evidence="1">Alpha-IPM isomerase</fullName>
        <shortName evidence="1">IPMI</shortName>
    </alternativeName>
    <alternativeName>
        <fullName evidence="1">Isopropylmalate isomerase</fullName>
    </alternativeName>
</protein>
<sequence length="469" mass="50803">MAQTLYDKLWNSHVVHTEEDGTALLYIDRQLLHEVTSPQAFEGLKLAQRPVWRISANLAVSDHNVPTTDRSHGIADPVSKLQVDTLDANCDAYGITQFKMNDVRQGIVHIIGPEQGATLPGMTIVCGDSHTSTHGAFGALAHGIGTSEVEHVLATQTLLQKKSKNMLVKVEGQLPRGCTAKDIVLAIIGRIGTAGGTGYAIEFGGSTIRALTMEGRMTVCNMAIEAGARAGMVAVDDTTVEYLKGRPFVPTGAEWDQAVEYWKTFRSDEGAQFDRVVELDAAQIVPQVTWGTSPEMVTSIDGRVPDPEREKDPVKRDAMERALAYMALAPNTPIEAIKVDKIFIGSCTNARIEDIRAAAYVVKKLNRRVAPNVRLAMVVPGSGLVKAQAEREGLDKVFTEAGFEWREPGCSMCLAMNADRLEPGERCASTSNRNFEGRQGQGGRTHLVSPAMAAAAAIEGHFVDIRRLG</sequence>
<proteinExistence type="inferred from homology"/>
<reference key="1">
    <citation type="journal article" date="2010" name="Genome Biol. Evol.">
        <title>Continuing evolution of Burkholderia mallei through genome reduction and large-scale rearrangements.</title>
        <authorList>
            <person name="Losada L."/>
            <person name="Ronning C.M."/>
            <person name="DeShazer D."/>
            <person name="Woods D."/>
            <person name="Fedorova N."/>
            <person name="Kim H.S."/>
            <person name="Shabalina S.A."/>
            <person name="Pearson T.R."/>
            <person name="Brinkac L."/>
            <person name="Tan P."/>
            <person name="Nandi T."/>
            <person name="Crabtree J."/>
            <person name="Badger J."/>
            <person name="Beckstrom-Sternberg S."/>
            <person name="Saqib M."/>
            <person name="Schutzer S.E."/>
            <person name="Keim P."/>
            <person name="Nierman W.C."/>
        </authorList>
    </citation>
    <scope>NUCLEOTIDE SEQUENCE [LARGE SCALE GENOMIC DNA]</scope>
    <source>
        <strain>1106a</strain>
    </source>
</reference>
<keyword id="KW-0004">4Fe-4S</keyword>
<keyword id="KW-0028">Amino-acid biosynthesis</keyword>
<keyword id="KW-0100">Branched-chain amino acid biosynthesis</keyword>
<keyword id="KW-0408">Iron</keyword>
<keyword id="KW-0411">Iron-sulfur</keyword>
<keyword id="KW-0432">Leucine biosynthesis</keyword>
<keyword id="KW-0456">Lyase</keyword>
<keyword id="KW-0479">Metal-binding</keyword>
<organism>
    <name type="scientific">Burkholderia pseudomallei (strain 1106a)</name>
    <dbReference type="NCBI Taxonomy" id="357348"/>
    <lineage>
        <taxon>Bacteria</taxon>
        <taxon>Pseudomonadati</taxon>
        <taxon>Pseudomonadota</taxon>
        <taxon>Betaproteobacteria</taxon>
        <taxon>Burkholderiales</taxon>
        <taxon>Burkholderiaceae</taxon>
        <taxon>Burkholderia</taxon>
        <taxon>pseudomallei group</taxon>
    </lineage>
</organism>
<dbReference type="EC" id="4.2.1.33" evidence="1"/>
<dbReference type="EMBL" id="CP000573">
    <property type="protein sequence ID" value="ABN93344.1"/>
    <property type="molecule type" value="Genomic_DNA"/>
</dbReference>
<dbReference type="RefSeq" id="WP_004528981.1">
    <property type="nucleotide sequence ID" value="NC_009078.1"/>
</dbReference>
<dbReference type="SMR" id="A3P7N9"/>
<dbReference type="GeneID" id="93063906"/>
<dbReference type="KEGG" id="bpl:BURPS1106A_A2316"/>
<dbReference type="HOGENOM" id="CLU_006714_3_4_4"/>
<dbReference type="UniPathway" id="UPA00048">
    <property type="reaction ID" value="UER00071"/>
</dbReference>
<dbReference type="Proteomes" id="UP000006738">
    <property type="component" value="Chromosome II"/>
</dbReference>
<dbReference type="GO" id="GO:0003861">
    <property type="term" value="F:3-isopropylmalate dehydratase activity"/>
    <property type="evidence" value="ECO:0007669"/>
    <property type="project" value="UniProtKB-UniRule"/>
</dbReference>
<dbReference type="GO" id="GO:0051539">
    <property type="term" value="F:4 iron, 4 sulfur cluster binding"/>
    <property type="evidence" value="ECO:0007669"/>
    <property type="project" value="UniProtKB-KW"/>
</dbReference>
<dbReference type="GO" id="GO:0046872">
    <property type="term" value="F:metal ion binding"/>
    <property type="evidence" value="ECO:0007669"/>
    <property type="project" value="UniProtKB-KW"/>
</dbReference>
<dbReference type="GO" id="GO:0009098">
    <property type="term" value="P:L-leucine biosynthetic process"/>
    <property type="evidence" value="ECO:0007669"/>
    <property type="project" value="UniProtKB-UniRule"/>
</dbReference>
<dbReference type="CDD" id="cd01583">
    <property type="entry name" value="IPMI"/>
    <property type="match status" value="1"/>
</dbReference>
<dbReference type="FunFam" id="3.30.499.10:FF:000007">
    <property type="entry name" value="3-isopropylmalate dehydratase large subunit"/>
    <property type="match status" value="1"/>
</dbReference>
<dbReference type="Gene3D" id="3.30.499.10">
    <property type="entry name" value="Aconitase, domain 3"/>
    <property type="match status" value="2"/>
</dbReference>
<dbReference type="HAMAP" id="MF_01026">
    <property type="entry name" value="LeuC_type1"/>
    <property type="match status" value="1"/>
</dbReference>
<dbReference type="InterPro" id="IPR004430">
    <property type="entry name" value="3-IsopropMal_deHydase_lsu"/>
</dbReference>
<dbReference type="InterPro" id="IPR015931">
    <property type="entry name" value="Acnase/IPM_dHydase_lsu_aba_1/3"/>
</dbReference>
<dbReference type="InterPro" id="IPR001030">
    <property type="entry name" value="Acoase/IPM_deHydtase_lsu_aba"/>
</dbReference>
<dbReference type="InterPro" id="IPR018136">
    <property type="entry name" value="Aconitase_4Fe-4S_BS"/>
</dbReference>
<dbReference type="InterPro" id="IPR036008">
    <property type="entry name" value="Aconitase_4Fe-4S_dom"/>
</dbReference>
<dbReference type="InterPro" id="IPR050067">
    <property type="entry name" value="IPM_dehydratase_rel_enz"/>
</dbReference>
<dbReference type="InterPro" id="IPR033941">
    <property type="entry name" value="IPMI_cat"/>
</dbReference>
<dbReference type="NCBIfam" id="TIGR00170">
    <property type="entry name" value="leuC"/>
    <property type="match status" value="1"/>
</dbReference>
<dbReference type="NCBIfam" id="NF004016">
    <property type="entry name" value="PRK05478.1"/>
    <property type="match status" value="1"/>
</dbReference>
<dbReference type="NCBIfam" id="NF009116">
    <property type="entry name" value="PRK12466.1"/>
    <property type="match status" value="1"/>
</dbReference>
<dbReference type="PANTHER" id="PTHR43822:SF9">
    <property type="entry name" value="3-ISOPROPYLMALATE DEHYDRATASE"/>
    <property type="match status" value="1"/>
</dbReference>
<dbReference type="PANTHER" id="PTHR43822">
    <property type="entry name" value="HOMOACONITASE, MITOCHONDRIAL-RELATED"/>
    <property type="match status" value="1"/>
</dbReference>
<dbReference type="Pfam" id="PF00330">
    <property type="entry name" value="Aconitase"/>
    <property type="match status" value="1"/>
</dbReference>
<dbReference type="PRINTS" id="PR00415">
    <property type="entry name" value="ACONITASE"/>
</dbReference>
<dbReference type="SUPFAM" id="SSF53732">
    <property type="entry name" value="Aconitase iron-sulfur domain"/>
    <property type="match status" value="1"/>
</dbReference>
<dbReference type="PROSITE" id="PS00450">
    <property type="entry name" value="ACONITASE_1"/>
    <property type="match status" value="1"/>
</dbReference>
<dbReference type="PROSITE" id="PS01244">
    <property type="entry name" value="ACONITASE_2"/>
    <property type="match status" value="1"/>
</dbReference>
<name>LEUC_BURP0</name>
<accession>A3P7N9</accession>
<comment type="function">
    <text evidence="1">Catalyzes the isomerization between 2-isopropylmalate and 3-isopropylmalate, via the formation of 2-isopropylmaleate.</text>
</comment>
<comment type="catalytic activity">
    <reaction evidence="1">
        <text>(2R,3S)-3-isopropylmalate = (2S)-2-isopropylmalate</text>
        <dbReference type="Rhea" id="RHEA:32287"/>
        <dbReference type="ChEBI" id="CHEBI:1178"/>
        <dbReference type="ChEBI" id="CHEBI:35121"/>
        <dbReference type="EC" id="4.2.1.33"/>
    </reaction>
</comment>
<comment type="cofactor">
    <cofactor evidence="1">
        <name>[4Fe-4S] cluster</name>
        <dbReference type="ChEBI" id="CHEBI:49883"/>
    </cofactor>
    <text evidence="1">Binds 1 [4Fe-4S] cluster per subunit.</text>
</comment>
<comment type="pathway">
    <text evidence="1">Amino-acid biosynthesis; L-leucine biosynthesis; L-leucine from 3-methyl-2-oxobutanoate: step 2/4.</text>
</comment>
<comment type="subunit">
    <text evidence="1">Heterodimer of LeuC and LeuD.</text>
</comment>
<comment type="similarity">
    <text evidence="1">Belongs to the aconitase/IPM isomerase family. LeuC type 1 subfamily.</text>
</comment>
<feature type="chain" id="PRO_1000063539" description="3-isopropylmalate dehydratase large subunit">
    <location>
        <begin position="1"/>
        <end position="469"/>
    </location>
</feature>
<feature type="binding site" evidence="1">
    <location>
        <position position="347"/>
    </location>
    <ligand>
        <name>[4Fe-4S] cluster</name>
        <dbReference type="ChEBI" id="CHEBI:49883"/>
    </ligand>
</feature>
<feature type="binding site" evidence="1">
    <location>
        <position position="410"/>
    </location>
    <ligand>
        <name>[4Fe-4S] cluster</name>
        <dbReference type="ChEBI" id="CHEBI:49883"/>
    </ligand>
</feature>
<feature type="binding site" evidence="1">
    <location>
        <position position="413"/>
    </location>
    <ligand>
        <name>[4Fe-4S] cluster</name>
        <dbReference type="ChEBI" id="CHEBI:49883"/>
    </ligand>
</feature>